<gene>
    <name type="primary">RWDD1</name>
    <name type="synonym">DFRP2</name>
    <name type="ORF">CGI-24</name>
    <name type="ORF">PTD013</name>
</gene>
<proteinExistence type="evidence at protein level"/>
<name>RWDD1_HUMAN</name>
<sequence>MTDYGEEQRNELEALESIYPDSFTVLSENPPSFTITVTSEAGENDETVQTTLKFTYSEKYPDEAPLYEIFSQENLEDNDVSDILKLLALQAEENLGMVMIFTLVTAVQEKLNEIVDQIKTRREEEKKQKEKEAEEAEKQLFHGTPVTIENFLNWKAKFDAELLEIKKKRMKEEEQAGKNKLSGKQLFETDHNLDTSDIQFLEDAGNNVEVDESLFQEMDDLELEDDEDDPDYNPADPESDSAD</sequence>
<keyword id="KW-0002">3D-structure</keyword>
<keyword id="KW-0007">Acetylation</keyword>
<keyword id="KW-0025">Alternative splicing</keyword>
<keyword id="KW-0597">Phosphoprotein</keyword>
<keyword id="KW-1267">Proteomics identification</keyword>
<keyword id="KW-1185">Reference proteome</keyword>
<reference key="1">
    <citation type="journal article" date="2000" name="Genome Res.">
        <title>Identification of novel human genes evolutionarily conserved in Caenorhabditis elegans by comparative proteomics.</title>
        <authorList>
            <person name="Lai C.-H."/>
            <person name="Chou C.-Y."/>
            <person name="Ch'ang L.-Y."/>
            <person name="Liu C.-S."/>
            <person name="Lin W.-C."/>
        </authorList>
    </citation>
    <scope>NUCLEOTIDE SEQUENCE [LARGE SCALE MRNA] (ISOFORM 1)</scope>
</reference>
<reference key="2">
    <citation type="submission" date="1998-09" db="EMBL/GenBank/DDBJ databases">
        <authorList>
            <person name="Song H."/>
            <person name="Peng Y."/>
            <person name="Dai M."/>
            <person name="Huang Q."/>
            <person name="Mao Y."/>
            <person name="Zhang Q."/>
            <person name="Mao M."/>
            <person name="Fu G."/>
            <person name="Luo M."/>
            <person name="Chen J."/>
            <person name="Hu R."/>
        </authorList>
    </citation>
    <scope>NUCLEOTIDE SEQUENCE [LARGE SCALE MRNA] (ISOFORM 1)</scope>
    <source>
        <tissue>Pituitary tumor</tissue>
    </source>
</reference>
<reference key="3">
    <citation type="journal article" date="2004" name="Nat. Genet.">
        <title>Complete sequencing and characterization of 21,243 full-length human cDNAs.</title>
        <authorList>
            <person name="Ota T."/>
            <person name="Suzuki Y."/>
            <person name="Nishikawa T."/>
            <person name="Otsuki T."/>
            <person name="Sugiyama T."/>
            <person name="Irie R."/>
            <person name="Wakamatsu A."/>
            <person name="Hayashi K."/>
            <person name="Sato H."/>
            <person name="Nagai K."/>
            <person name="Kimura K."/>
            <person name="Makita H."/>
            <person name="Sekine M."/>
            <person name="Obayashi M."/>
            <person name="Nishi T."/>
            <person name="Shibahara T."/>
            <person name="Tanaka T."/>
            <person name="Ishii S."/>
            <person name="Yamamoto J."/>
            <person name="Saito K."/>
            <person name="Kawai Y."/>
            <person name="Isono Y."/>
            <person name="Nakamura Y."/>
            <person name="Nagahari K."/>
            <person name="Murakami K."/>
            <person name="Yasuda T."/>
            <person name="Iwayanagi T."/>
            <person name="Wagatsuma M."/>
            <person name="Shiratori A."/>
            <person name="Sudo H."/>
            <person name="Hosoiri T."/>
            <person name="Kaku Y."/>
            <person name="Kodaira H."/>
            <person name="Kondo H."/>
            <person name="Sugawara M."/>
            <person name="Takahashi M."/>
            <person name="Kanda K."/>
            <person name="Yokoi T."/>
            <person name="Furuya T."/>
            <person name="Kikkawa E."/>
            <person name="Omura Y."/>
            <person name="Abe K."/>
            <person name="Kamihara K."/>
            <person name="Katsuta N."/>
            <person name="Sato K."/>
            <person name="Tanikawa M."/>
            <person name="Yamazaki M."/>
            <person name="Ninomiya K."/>
            <person name="Ishibashi T."/>
            <person name="Yamashita H."/>
            <person name="Murakawa K."/>
            <person name="Fujimori K."/>
            <person name="Tanai H."/>
            <person name="Kimata M."/>
            <person name="Watanabe M."/>
            <person name="Hiraoka S."/>
            <person name="Chiba Y."/>
            <person name="Ishida S."/>
            <person name="Ono Y."/>
            <person name="Takiguchi S."/>
            <person name="Watanabe S."/>
            <person name="Yosida M."/>
            <person name="Hotuta T."/>
            <person name="Kusano J."/>
            <person name="Kanehori K."/>
            <person name="Takahashi-Fujii A."/>
            <person name="Hara H."/>
            <person name="Tanase T.-O."/>
            <person name="Nomura Y."/>
            <person name="Togiya S."/>
            <person name="Komai F."/>
            <person name="Hara R."/>
            <person name="Takeuchi K."/>
            <person name="Arita M."/>
            <person name="Imose N."/>
            <person name="Musashino K."/>
            <person name="Yuuki H."/>
            <person name="Oshima A."/>
            <person name="Sasaki N."/>
            <person name="Aotsuka S."/>
            <person name="Yoshikawa Y."/>
            <person name="Matsunawa H."/>
            <person name="Ichihara T."/>
            <person name="Shiohata N."/>
            <person name="Sano S."/>
            <person name="Moriya S."/>
            <person name="Momiyama H."/>
            <person name="Satoh N."/>
            <person name="Takami S."/>
            <person name="Terashima Y."/>
            <person name="Suzuki O."/>
            <person name="Nakagawa S."/>
            <person name="Senoh A."/>
            <person name="Mizoguchi H."/>
            <person name="Goto Y."/>
            <person name="Shimizu F."/>
            <person name="Wakebe H."/>
            <person name="Hishigaki H."/>
            <person name="Watanabe T."/>
            <person name="Sugiyama A."/>
            <person name="Takemoto M."/>
            <person name="Kawakami B."/>
            <person name="Yamazaki M."/>
            <person name="Watanabe K."/>
            <person name="Kumagai A."/>
            <person name="Itakura S."/>
            <person name="Fukuzumi Y."/>
            <person name="Fujimori Y."/>
            <person name="Komiyama M."/>
            <person name="Tashiro H."/>
            <person name="Tanigami A."/>
            <person name="Fujiwara T."/>
            <person name="Ono T."/>
            <person name="Yamada K."/>
            <person name="Fujii Y."/>
            <person name="Ozaki K."/>
            <person name="Hirao M."/>
            <person name="Ohmori Y."/>
            <person name="Kawabata A."/>
            <person name="Hikiji T."/>
            <person name="Kobatake N."/>
            <person name="Inagaki H."/>
            <person name="Ikema Y."/>
            <person name="Okamoto S."/>
            <person name="Okitani R."/>
            <person name="Kawakami T."/>
            <person name="Noguchi S."/>
            <person name="Itoh T."/>
            <person name="Shigeta K."/>
            <person name="Senba T."/>
            <person name="Matsumura K."/>
            <person name="Nakajima Y."/>
            <person name="Mizuno T."/>
            <person name="Morinaga M."/>
            <person name="Sasaki M."/>
            <person name="Togashi T."/>
            <person name="Oyama M."/>
            <person name="Hata H."/>
            <person name="Watanabe M."/>
            <person name="Komatsu T."/>
            <person name="Mizushima-Sugano J."/>
            <person name="Satoh T."/>
            <person name="Shirai Y."/>
            <person name="Takahashi Y."/>
            <person name="Nakagawa K."/>
            <person name="Okumura K."/>
            <person name="Nagase T."/>
            <person name="Nomura N."/>
            <person name="Kikuchi H."/>
            <person name="Masuho Y."/>
            <person name="Yamashita R."/>
            <person name="Nakai K."/>
            <person name="Yada T."/>
            <person name="Nakamura Y."/>
            <person name="Ohara O."/>
            <person name="Isogai T."/>
            <person name="Sugano S."/>
        </authorList>
    </citation>
    <scope>NUCLEOTIDE SEQUENCE [LARGE SCALE MRNA] (ISOFORMS 1 AND 2)</scope>
</reference>
<reference key="4">
    <citation type="journal article" date="2003" name="Nature">
        <title>The DNA sequence and analysis of human chromosome 6.</title>
        <authorList>
            <person name="Mungall A.J."/>
            <person name="Palmer S.A."/>
            <person name="Sims S.K."/>
            <person name="Edwards C.A."/>
            <person name="Ashurst J.L."/>
            <person name="Wilming L."/>
            <person name="Jones M.C."/>
            <person name="Horton R."/>
            <person name="Hunt S.E."/>
            <person name="Scott C.E."/>
            <person name="Gilbert J.G.R."/>
            <person name="Clamp M.E."/>
            <person name="Bethel G."/>
            <person name="Milne S."/>
            <person name="Ainscough R."/>
            <person name="Almeida J.P."/>
            <person name="Ambrose K.D."/>
            <person name="Andrews T.D."/>
            <person name="Ashwell R.I.S."/>
            <person name="Babbage A.K."/>
            <person name="Bagguley C.L."/>
            <person name="Bailey J."/>
            <person name="Banerjee R."/>
            <person name="Barker D.J."/>
            <person name="Barlow K.F."/>
            <person name="Bates K."/>
            <person name="Beare D.M."/>
            <person name="Beasley H."/>
            <person name="Beasley O."/>
            <person name="Bird C.P."/>
            <person name="Blakey S.E."/>
            <person name="Bray-Allen S."/>
            <person name="Brook J."/>
            <person name="Brown A.J."/>
            <person name="Brown J.Y."/>
            <person name="Burford D.C."/>
            <person name="Burrill W."/>
            <person name="Burton J."/>
            <person name="Carder C."/>
            <person name="Carter N.P."/>
            <person name="Chapman J.C."/>
            <person name="Clark S.Y."/>
            <person name="Clark G."/>
            <person name="Clee C.M."/>
            <person name="Clegg S."/>
            <person name="Cobley V."/>
            <person name="Collier R.E."/>
            <person name="Collins J.E."/>
            <person name="Colman L.K."/>
            <person name="Corby N.R."/>
            <person name="Coville G.J."/>
            <person name="Culley K.M."/>
            <person name="Dhami P."/>
            <person name="Davies J."/>
            <person name="Dunn M."/>
            <person name="Earthrowl M.E."/>
            <person name="Ellington A.E."/>
            <person name="Evans K.A."/>
            <person name="Faulkner L."/>
            <person name="Francis M.D."/>
            <person name="Frankish A."/>
            <person name="Frankland J."/>
            <person name="French L."/>
            <person name="Garner P."/>
            <person name="Garnett J."/>
            <person name="Ghori M.J."/>
            <person name="Gilby L.M."/>
            <person name="Gillson C.J."/>
            <person name="Glithero R.J."/>
            <person name="Grafham D.V."/>
            <person name="Grant M."/>
            <person name="Gribble S."/>
            <person name="Griffiths C."/>
            <person name="Griffiths M.N.D."/>
            <person name="Hall R."/>
            <person name="Halls K.S."/>
            <person name="Hammond S."/>
            <person name="Harley J.L."/>
            <person name="Hart E.A."/>
            <person name="Heath P.D."/>
            <person name="Heathcott R."/>
            <person name="Holmes S.J."/>
            <person name="Howden P.J."/>
            <person name="Howe K.L."/>
            <person name="Howell G.R."/>
            <person name="Huckle E."/>
            <person name="Humphray S.J."/>
            <person name="Humphries M.D."/>
            <person name="Hunt A.R."/>
            <person name="Johnson C.M."/>
            <person name="Joy A.A."/>
            <person name="Kay M."/>
            <person name="Keenan S.J."/>
            <person name="Kimberley A.M."/>
            <person name="King A."/>
            <person name="Laird G.K."/>
            <person name="Langford C."/>
            <person name="Lawlor S."/>
            <person name="Leongamornlert D.A."/>
            <person name="Leversha M."/>
            <person name="Lloyd C.R."/>
            <person name="Lloyd D.M."/>
            <person name="Loveland J.E."/>
            <person name="Lovell J."/>
            <person name="Martin S."/>
            <person name="Mashreghi-Mohammadi M."/>
            <person name="Maslen G.L."/>
            <person name="Matthews L."/>
            <person name="McCann O.T."/>
            <person name="McLaren S.J."/>
            <person name="McLay K."/>
            <person name="McMurray A."/>
            <person name="Moore M.J.F."/>
            <person name="Mullikin J.C."/>
            <person name="Niblett D."/>
            <person name="Nickerson T."/>
            <person name="Novik K.L."/>
            <person name="Oliver K."/>
            <person name="Overton-Larty E.K."/>
            <person name="Parker A."/>
            <person name="Patel R."/>
            <person name="Pearce A.V."/>
            <person name="Peck A.I."/>
            <person name="Phillimore B.J.C.T."/>
            <person name="Phillips S."/>
            <person name="Plumb R.W."/>
            <person name="Porter K.M."/>
            <person name="Ramsey Y."/>
            <person name="Ranby S.A."/>
            <person name="Rice C.M."/>
            <person name="Ross M.T."/>
            <person name="Searle S.M."/>
            <person name="Sehra H.K."/>
            <person name="Sheridan E."/>
            <person name="Skuce C.D."/>
            <person name="Smith S."/>
            <person name="Smith M."/>
            <person name="Spraggon L."/>
            <person name="Squares S.L."/>
            <person name="Steward C.A."/>
            <person name="Sycamore N."/>
            <person name="Tamlyn-Hall G."/>
            <person name="Tester J."/>
            <person name="Theaker A.J."/>
            <person name="Thomas D.W."/>
            <person name="Thorpe A."/>
            <person name="Tracey A."/>
            <person name="Tromans A."/>
            <person name="Tubby B."/>
            <person name="Wall M."/>
            <person name="Wallis J.M."/>
            <person name="West A.P."/>
            <person name="White S.S."/>
            <person name="Whitehead S.L."/>
            <person name="Whittaker H."/>
            <person name="Wild A."/>
            <person name="Willey D.J."/>
            <person name="Wilmer T.E."/>
            <person name="Wood J.M."/>
            <person name="Wray P.W."/>
            <person name="Wyatt J.C."/>
            <person name="Young L."/>
            <person name="Younger R.M."/>
            <person name="Bentley D.R."/>
            <person name="Coulson A."/>
            <person name="Durbin R.M."/>
            <person name="Hubbard T."/>
            <person name="Sulston J.E."/>
            <person name="Dunham I."/>
            <person name="Rogers J."/>
            <person name="Beck S."/>
        </authorList>
    </citation>
    <scope>NUCLEOTIDE SEQUENCE [LARGE SCALE GENOMIC DNA]</scope>
</reference>
<reference key="5">
    <citation type="submission" date="2005-09" db="EMBL/GenBank/DDBJ databases">
        <authorList>
            <person name="Mural R.J."/>
            <person name="Istrail S."/>
            <person name="Sutton G.G."/>
            <person name="Florea L."/>
            <person name="Halpern A.L."/>
            <person name="Mobarry C.M."/>
            <person name="Lippert R."/>
            <person name="Walenz B."/>
            <person name="Shatkay H."/>
            <person name="Dew I."/>
            <person name="Miller J.R."/>
            <person name="Flanigan M.J."/>
            <person name="Edwards N.J."/>
            <person name="Bolanos R."/>
            <person name="Fasulo D."/>
            <person name="Halldorsson B.V."/>
            <person name="Hannenhalli S."/>
            <person name="Turner R."/>
            <person name="Yooseph S."/>
            <person name="Lu F."/>
            <person name="Nusskern D.R."/>
            <person name="Shue B.C."/>
            <person name="Zheng X.H."/>
            <person name="Zhong F."/>
            <person name="Delcher A.L."/>
            <person name="Huson D.H."/>
            <person name="Kravitz S.A."/>
            <person name="Mouchard L."/>
            <person name="Reinert K."/>
            <person name="Remington K.A."/>
            <person name="Clark A.G."/>
            <person name="Waterman M.S."/>
            <person name="Eichler E.E."/>
            <person name="Adams M.D."/>
            <person name="Hunkapiller M.W."/>
            <person name="Myers E.W."/>
            <person name="Venter J.C."/>
        </authorList>
    </citation>
    <scope>NUCLEOTIDE SEQUENCE [LARGE SCALE GENOMIC DNA]</scope>
</reference>
<reference key="6">
    <citation type="journal article" date="2004" name="Genome Res.">
        <title>The status, quality, and expansion of the NIH full-length cDNA project: the Mammalian Gene Collection (MGC).</title>
        <authorList>
            <consortium name="The MGC Project Team"/>
        </authorList>
    </citation>
    <scope>NUCLEOTIDE SEQUENCE [LARGE SCALE MRNA] (ISOFORM 1)</scope>
    <source>
        <tissue>Uterus</tissue>
    </source>
</reference>
<reference key="7">
    <citation type="journal article" date="2010" name="Sci. Signal.">
        <title>Quantitative phosphoproteomics reveals widespread full phosphorylation site occupancy during mitosis.</title>
        <authorList>
            <person name="Olsen J.V."/>
            <person name="Vermeulen M."/>
            <person name="Santamaria A."/>
            <person name="Kumar C."/>
            <person name="Miller M.L."/>
            <person name="Jensen L.J."/>
            <person name="Gnad F."/>
            <person name="Cox J."/>
            <person name="Jensen T.S."/>
            <person name="Nigg E.A."/>
            <person name="Brunak S."/>
            <person name="Mann M."/>
        </authorList>
    </citation>
    <scope>PHOSPHORYLATION [LARGE SCALE ANALYSIS] AT THR-144</scope>
    <scope>IDENTIFICATION BY MASS SPECTROMETRY [LARGE SCALE ANALYSIS]</scope>
    <source>
        <tissue>Cervix carcinoma</tissue>
    </source>
</reference>
<reference key="8">
    <citation type="journal article" date="2011" name="BMC Syst. Biol.">
        <title>Initial characterization of the human central proteome.</title>
        <authorList>
            <person name="Burkard T.R."/>
            <person name="Planyavsky M."/>
            <person name="Kaupe I."/>
            <person name="Breitwieser F.P."/>
            <person name="Buerckstuemmer T."/>
            <person name="Bennett K.L."/>
            <person name="Superti-Furga G."/>
            <person name="Colinge J."/>
        </authorList>
    </citation>
    <scope>IDENTIFICATION BY MASS SPECTROMETRY [LARGE SCALE ANALYSIS]</scope>
</reference>
<reference key="9">
    <citation type="journal article" date="2012" name="Proc. Natl. Acad. Sci. U.S.A.">
        <title>N-terminal acetylome analyses and functional insights of the N-terminal acetyltransferase NatB.</title>
        <authorList>
            <person name="Van Damme P."/>
            <person name="Lasa M."/>
            <person name="Polevoda B."/>
            <person name="Gazquez C."/>
            <person name="Elosegui-Artola A."/>
            <person name="Kim D.S."/>
            <person name="De Juan-Pardo E."/>
            <person name="Demeyer K."/>
            <person name="Hole K."/>
            <person name="Larrea E."/>
            <person name="Timmerman E."/>
            <person name="Prieto J."/>
            <person name="Arnesen T."/>
            <person name="Sherman F."/>
            <person name="Gevaert K."/>
            <person name="Aldabe R."/>
        </authorList>
    </citation>
    <scope>ACETYLATION [LARGE SCALE ANALYSIS] AT THR-2</scope>
    <scope>CLEAVAGE OF INITIATOR METHIONINE [LARGE SCALE ANALYSIS]</scope>
    <scope>IDENTIFICATION BY MASS SPECTROMETRY [LARGE SCALE ANALYSIS]</scope>
</reference>
<reference key="10">
    <citation type="journal article" date="2014" name="J. Proteomics">
        <title>An enzyme assisted RP-RPLC approach for in-depth analysis of human liver phosphoproteome.</title>
        <authorList>
            <person name="Bian Y."/>
            <person name="Song C."/>
            <person name="Cheng K."/>
            <person name="Dong M."/>
            <person name="Wang F."/>
            <person name="Huang J."/>
            <person name="Sun D."/>
            <person name="Wang L."/>
            <person name="Ye M."/>
            <person name="Zou H."/>
        </authorList>
    </citation>
    <scope>IDENTIFICATION BY MASS SPECTROMETRY [LARGE SCALE ANALYSIS]</scope>
    <source>
        <tissue>Liver</tissue>
    </source>
</reference>
<reference key="11">
    <citation type="submission" date="2007-08" db="PDB data bank">
        <title>Solution structure of the RWD domain of human RWD domain containing protein 1.</title>
        <authorList>
            <consortium name="RIKEN structural genomics initiative (RSGI)"/>
        </authorList>
    </citation>
    <scope>STRUCTURE BY NMR OF 1-121</scope>
</reference>
<dbReference type="EMBL" id="AF132958">
    <property type="protein sequence ID" value="AAD27733.1"/>
    <property type="molecule type" value="mRNA"/>
</dbReference>
<dbReference type="EMBL" id="AF092134">
    <property type="protein sequence ID" value="AAD40376.1"/>
    <property type="molecule type" value="mRNA"/>
</dbReference>
<dbReference type="EMBL" id="AK290727">
    <property type="protein sequence ID" value="BAF83416.1"/>
    <property type="molecule type" value="mRNA"/>
</dbReference>
<dbReference type="EMBL" id="AK301089">
    <property type="protein sequence ID" value="BAG62691.1"/>
    <property type="molecule type" value="mRNA"/>
</dbReference>
<dbReference type="EMBL" id="AL121953">
    <property type="status" value="NOT_ANNOTATED_CDS"/>
    <property type="molecule type" value="Genomic_DNA"/>
</dbReference>
<dbReference type="EMBL" id="CH471051">
    <property type="protein sequence ID" value="EAW48221.1"/>
    <property type="molecule type" value="Genomic_DNA"/>
</dbReference>
<dbReference type="EMBL" id="CH471051">
    <property type="protein sequence ID" value="EAW48222.1"/>
    <property type="molecule type" value="Genomic_DNA"/>
</dbReference>
<dbReference type="EMBL" id="BC015802">
    <property type="protein sequence ID" value="AAH15802.1"/>
    <property type="molecule type" value="mRNA"/>
</dbReference>
<dbReference type="CCDS" id="CCDS34520.1">
    <molecule id="Q9H446-1"/>
</dbReference>
<dbReference type="CCDS" id="CCDS43496.1">
    <molecule id="Q9H446-2"/>
</dbReference>
<dbReference type="RefSeq" id="NP_001007465.1">
    <molecule id="Q9H446-2"/>
    <property type="nucleotide sequence ID" value="NM_001007464.3"/>
</dbReference>
<dbReference type="RefSeq" id="NP_057036.2">
    <molecule id="Q9H446-1"/>
    <property type="nucleotide sequence ID" value="NM_015952.4"/>
</dbReference>
<dbReference type="RefSeq" id="NP_057188.2">
    <molecule id="Q9H446-2"/>
    <property type="nucleotide sequence ID" value="NM_016104.3"/>
</dbReference>
<dbReference type="RefSeq" id="XP_047274819.1">
    <molecule id="Q9H446-2"/>
    <property type="nucleotide sequence ID" value="XM_047418863.1"/>
</dbReference>
<dbReference type="RefSeq" id="XP_054211557.1">
    <molecule id="Q9H446-2"/>
    <property type="nucleotide sequence ID" value="XM_054355582.1"/>
</dbReference>
<dbReference type="PDB" id="2EBM">
    <property type="method" value="NMR"/>
    <property type="chains" value="A=1-121"/>
</dbReference>
<dbReference type="PDBsum" id="2EBM"/>
<dbReference type="BMRB" id="Q9H446"/>
<dbReference type="SMR" id="Q9H446"/>
<dbReference type="BioGRID" id="119518">
    <property type="interactions" value="14"/>
</dbReference>
<dbReference type="CORUM" id="Q9H446"/>
<dbReference type="DIP" id="DIP-34520N"/>
<dbReference type="FunCoup" id="Q9H446">
    <property type="interactions" value="577"/>
</dbReference>
<dbReference type="IntAct" id="Q9H446">
    <property type="interactions" value="9"/>
</dbReference>
<dbReference type="STRING" id="9606.ENSP00000420357"/>
<dbReference type="iPTMnet" id="Q9H446"/>
<dbReference type="MetOSite" id="Q9H446"/>
<dbReference type="PhosphoSitePlus" id="Q9H446"/>
<dbReference type="BioMuta" id="RWDD1"/>
<dbReference type="DMDM" id="34098713"/>
<dbReference type="jPOST" id="Q9H446"/>
<dbReference type="MassIVE" id="Q9H446"/>
<dbReference type="PaxDb" id="9606-ENSP00000420357"/>
<dbReference type="PeptideAtlas" id="Q9H446"/>
<dbReference type="ProteomicsDB" id="1990"/>
<dbReference type="ProteomicsDB" id="80786">
    <molecule id="Q9H446-1"/>
</dbReference>
<dbReference type="Pumba" id="Q9H446"/>
<dbReference type="Antibodypedia" id="32499">
    <property type="antibodies" value="124 antibodies from 23 providers"/>
</dbReference>
<dbReference type="DNASU" id="51389"/>
<dbReference type="Ensembl" id="ENST00000466444.7">
    <molecule id="Q9H446-1"/>
    <property type="protein sequence ID" value="ENSP00000420357.2"/>
    <property type="gene ID" value="ENSG00000111832.13"/>
</dbReference>
<dbReference type="Ensembl" id="ENST00000487832.6">
    <molecule id="Q9H446-2"/>
    <property type="protein sequence ID" value="ENSP00000428778.1"/>
    <property type="gene ID" value="ENSG00000111832.13"/>
</dbReference>
<dbReference type="GeneID" id="51389"/>
<dbReference type="KEGG" id="hsa:51389"/>
<dbReference type="MANE-Select" id="ENST00000466444.7">
    <property type="protein sequence ID" value="ENSP00000420357.2"/>
    <property type="RefSeq nucleotide sequence ID" value="NM_015952.4"/>
    <property type="RefSeq protein sequence ID" value="NP_057036.2"/>
</dbReference>
<dbReference type="UCSC" id="uc003pxc.5">
    <molecule id="Q9H446-1"/>
    <property type="organism name" value="human"/>
</dbReference>
<dbReference type="AGR" id="HGNC:20993"/>
<dbReference type="CTD" id="51389"/>
<dbReference type="DisGeNET" id="51389"/>
<dbReference type="GeneCards" id="RWDD1"/>
<dbReference type="HGNC" id="HGNC:20993">
    <property type="gene designation" value="RWDD1"/>
</dbReference>
<dbReference type="HPA" id="ENSG00000111832">
    <property type="expression patterns" value="Low tissue specificity"/>
</dbReference>
<dbReference type="MIM" id="620844">
    <property type="type" value="gene"/>
</dbReference>
<dbReference type="neXtProt" id="NX_Q9H446"/>
<dbReference type="OpenTargets" id="ENSG00000111832"/>
<dbReference type="PharmGKB" id="PA134967923"/>
<dbReference type="VEuPathDB" id="HostDB:ENSG00000111832"/>
<dbReference type="eggNOG" id="KOG4018">
    <property type="taxonomic scope" value="Eukaryota"/>
</dbReference>
<dbReference type="GeneTree" id="ENSGT00390000009168"/>
<dbReference type="HOGENOM" id="CLU_084528_2_0_1"/>
<dbReference type="InParanoid" id="Q9H446"/>
<dbReference type="OMA" id="QWDEHKK"/>
<dbReference type="OrthoDB" id="277175at2759"/>
<dbReference type="PAN-GO" id="Q9H446">
    <property type="GO annotations" value="2 GO annotations based on evolutionary models"/>
</dbReference>
<dbReference type="PhylomeDB" id="Q9H446"/>
<dbReference type="TreeFam" id="TF313662"/>
<dbReference type="PathwayCommons" id="Q9H446"/>
<dbReference type="Reactome" id="R-HSA-9629569">
    <property type="pathway name" value="Protein hydroxylation"/>
</dbReference>
<dbReference type="SignaLink" id="Q9H446"/>
<dbReference type="BioGRID-ORCS" id="51389">
    <property type="hits" value="12 hits in 1151 CRISPR screens"/>
</dbReference>
<dbReference type="ChiTaRS" id="RWDD1">
    <property type="organism name" value="human"/>
</dbReference>
<dbReference type="EvolutionaryTrace" id="Q9H446"/>
<dbReference type="GenomeRNAi" id="51389"/>
<dbReference type="Pharos" id="Q9H446">
    <property type="development level" value="Tbio"/>
</dbReference>
<dbReference type="PRO" id="PR:Q9H446"/>
<dbReference type="Proteomes" id="UP000005640">
    <property type="component" value="Chromosome 6"/>
</dbReference>
<dbReference type="RNAct" id="Q9H446">
    <property type="molecule type" value="protein"/>
</dbReference>
<dbReference type="Bgee" id="ENSG00000111832">
    <property type="expression patterns" value="Expressed in calcaneal tendon and 218 other cell types or tissues"/>
</dbReference>
<dbReference type="ExpressionAtlas" id="Q9H446">
    <property type="expression patterns" value="baseline and differential"/>
</dbReference>
<dbReference type="GO" id="GO:0005829">
    <property type="term" value="C:cytosol"/>
    <property type="evidence" value="ECO:0000304"/>
    <property type="project" value="Reactome"/>
</dbReference>
<dbReference type="GO" id="GO:0030521">
    <property type="term" value="P:androgen receptor signaling pathway"/>
    <property type="evidence" value="ECO:0007669"/>
    <property type="project" value="Ensembl"/>
</dbReference>
<dbReference type="GO" id="GO:0034599">
    <property type="term" value="P:cellular response to oxidative stress"/>
    <property type="evidence" value="ECO:0007669"/>
    <property type="project" value="Ensembl"/>
</dbReference>
<dbReference type="GO" id="GO:0071394">
    <property type="term" value="P:cellular response to testosterone stimulus"/>
    <property type="evidence" value="ECO:0007669"/>
    <property type="project" value="Ensembl"/>
</dbReference>
<dbReference type="GO" id="GO:0002181">
    <property type="term" value="P:cytoplasmic translation"/>
    <property type="evidence" value="ECO:0000318"/>
    <property type="project" value="GO_Central"/>
</dbReference>
<dbReference type="CDD" id="cd23816">
    <property type="entry name" value="RWD_RWDD1"/>
    <property type="match status" value="1"/>
</dbReference>
<dbReference type="FunFam" id="3.10.110.10:FF:000064">
    <property type="entry name" value="RWD domain-containing protein 1"/>
    <property type="match status" value="1"/>
</dbReference>
<dbReference type="Gene3D" id="6.20.400.10">
    <property type="match status" value="1"/>
</dbReference>
<dbReference type="Gene3D" id="3.10.110.10">
    <property type="entry name" value="Ubiquitin Conjugating Enzyme"/>
    <property type="match status" value="1"/>
</dbReference>
<dbReference type="InterPro" id="IPR040213">
    <property type="entry name" value="GIR2-like"/>
</dbReference>
<dbReference type="InterPro" id="IPR006575">
    <property type="entry name" value="RWD_dom"/>
</dbReference>
<dbReference type="InterPro" id="IPR016135">
    <property type="entry name" value="UBQ-conjugating_enzyme/RWD"/>
</dbReference>
<dbReference type="InterPro" id="IPR032378">
    <property type="entry name" value="ZC3H15/TMA46_C"/>
</dbReference>
<dbReference type="PANTHER" id="PTHR12292">
    <property type="entry name" value="RWD DOMAIN-CONTAINING PROTEIN"/>
    <property type="match status" value="1"/>
</dbReference>
<dbReference type="Pfam" id="PF16543">
    <property type="entry name" value="DFRP_C"/>
    <property type="match status" value="1"/>
</dbReference>
<dbReference type="Pfam" id="PF05773">
    <property type="entry name" value="RWD"/>
    <property type="match status" value="1"/>
</dbReference>
<dbReference type="SMART" id="SM00591">
    <property type="entry name" value="RWD"/>
    <property type="match status" value="1"/>
</dbReference>
<dbReference type="SUPFAM" id="SSF54495">
    <property type="entry name" value="UBC-like"/>
    <property type="match status" value="1"/>
</dbReference>
<dbReference type="PROSITE" id="PS50908">
    <property type="entry name" value="RWD"/>
    <property type="match status" value="1"/>
</dbReference>
<organism>
    <name type="scientific">Homo sapiens</name>
    <name type="common">Human</name>
    <dbReference type="NCBI Taxonomy" id="9606"/>
    <lineage>
        <taxon>Eukaryota</taxon>
        <taxon>Metazoa</taxon>
        <taxon>Chordata</taxon>
        <taxon>Craniata</taxon>
        <taxon>Vertebrata</taxon>
        <taxon>Euteleostomi</taxon>
        <taxon>Mammalia</taxon>
        <taxon>Eutheria</taxon>
        <taxon>Euarchontoglires</taxon>
        <taxon>Primates</taxon>
        <taxon>Haplorrhini</taxon>
        <taxon>Catarrhini</taxon>
        <taxon>Hominidae</taxon>
        <taxon>Homo</taxon>
    </lineage>
</organism>
<comment type="function">
    <text evidence="1">Protects DRG2 from proteolytic degradation.</text>
</comment>
<comment type="subunit">
    <text evidence="1">Interacts with DRG2. Interacts with androgen receptor (By similarity).</text>
</comment>
<comment type="interaction">
    <interactant intactId="EBI-748952">
        <id>Q9H446</id>
    </interactant>
    <interactant intactId="EBI-719554">
        <id>Q9Y295</id>
        <label>DRG1</label>
    </interactant>
    <organismsDiffer>false</organismsDiffer>
    <experiments>8</experiments>
</comment>
<comment type="interaction">
    <interactant intactId="EBI-748952">
        <id>Q9H446</id>
    </interactant>
    <interactant intactId="EBI-750565">
        <id>P55039</id>
        <label>DRG2</label>
    </interactant>
    <organismsDiffer>false</organismsDiffer>
    <experiments>9</experiments>
</comment>
<comment type="alternative products">
    <event type="alternative splicing"/>
    <isoform>
        <id>Q9H446-1</id>
        <name>1</name>
        <sequence type="displayed"/>
    </isoform>
    <isoform>
        <id>Q9H446-2</id>
        <name>2</name>
        <sequence type="described" ref="VSP_044500"/>
    </isoform>
</comment>
<comment type="similarity">
    <text evidence="5">Belongs to the RWDD1/GIR2 family.</text>
</comment>
<accession>Q9H446</accession>
<accession>A8K3W2</accession>
<accession>A8MT24</accession>
<accession>Q9Y313</accession>
<accession>Q9Y6B3</accession>
<evidence type="ECO:0000250" key="1"/>
<evidence type="ECO:0000255" key="2">
    <source>
        <dbReference type="PROSITE-ProRule" id="PRU00179"/>
    </source>
</evidence>
<evidence type="ECO:0000256" key="3">
    <source>
        <dbReference type="SAM" id="MobiDB-lite"/>
    </source>
</evidence>
<evidence type="ECO:0000303" key="4">
    <source>
    </source>
</evidence>
<evidence type="ECO:0000305" key="5"/>
<evidence type="ECO:0007744" key="6">
    <source>
    </source>
</evidence>
<evidence type="ECO:0007744" key="7">
    <source>
    </source>
</evidence>
<evidence type="ECO:0007829" key="8">
    <source>
        <dbReference type="PDB" id="2EBM"/>
    </source>
</evidence>
<protein>
    <recommendedName>
        <fullName>RWD domain-containing protein 1</fullName>
    </recommendedName>
    <alternativeName>
        <fullName>DRG family-regulatory protein 2</fullName>
    </alternativeName>
</protein>
<feature type="initiator methionine" description="Removed" evidence="7">
    <location>
        <position position="1"/>
    </location>
</feature>
<feature type="chain" id="PRO_0000097540" description="RWD domain-containing protein 1">
    <location>
        <begin position="2"/>
        <end position="243"/>
    </location>
</feature>
<feature type="domain" description="RWD" evidence="2">
    <location>
        <begin position="10"/>
        <end position="114"/>
    </location>
</feature>
<feature type="region of interest" description="Interaction with DRG2" evidence="1">
    <location>
        <begin position="142"/>
        <end position="197"/>
    </location>
</feature>
<feature type="region of interest" description="Disordered" evidence="3">
    <location>
        <begin position="198"/>
        <end position="243"/>
    </location>
</feature>
<feature type="compositionally biased region" description="Acidic residues" evidence="3">
    <location>
        <begin position="209"/>
        <end position="243"/>
    </location>
</feature>
<feature type="modified residue" description="N-acetylthreonine" evidence="7">
    <location>
        <position position="2"/>
    </location>
</feature>
<feature type="modified residue" description="Phosphothreonine" evidence="6">
    <location>
        <position position="144"/>
    </location>
</feature>
<feature type="splice variant" id="VSP_044500" description="In isoform 2." evidence="4">
    <location>
        <begin position="1"/>
        <end position="96"/>
    </location>
</feature>
<feature type="sequence conflict" description="In Ref. 1; AAD27733." evidence="5" ref="1">
    <original>TRREEEKKQKE</original>
    <variation>LEERRKNKR</variation>
    <location>
        <begin position="120"/>
        <end position="130"/>
    </location>
</feature>
<feature type="sequence conflict" description="In Ref. 2; AAD40376." evidence="5" ref="2">
    <original>Q</original>
    <variation>R</variation>
    <location>
        <position position="139"/>
    </location>
</feature>
<feature type="helix" evidence="8">
    <location>
        <begin position="4"/>
        <end position="18"/>
    </location>
</feature>
<feature type="strand" evidence="8">
    <location>
        <begin position="20"/>
        <end position="25"/>
    </location>
</feature>
<feature type="strand" evidence="8">
    <location>
        <begin position="28"/>
        <end position="30"/>
    </location>
</feature>
<feature type="strand" evidence="8">
    <location>
        <begin position="32"/>
        <end position="35"/>
    </location>
</feature>
<feature type="strand" evidence="8">
    <location>
        <begin position="49"/>
        <end position="55"/>
    </location>
</feature>
<feature type="turn" evidence="8">
    <location>
        <begin position="60"/>
        <end position="62"/>
    </location>
</feature>
<feature type="strand" evidence="8">
    <location>
        <begin position="66"/>
        <end position="74"/>
    </location>
</feature>
<feature type="helix" evidence="8">
    <location>
        <begin position="77"/>
        <end position="94"/>
    </location>
</feature>
<feature type="helix" evidence="8">
    <location>
        <begin position="100"/>
        <end position="117"/>
    </location>
</feature>
<feature type="helix" evidence="8">
    <location>
        <begin position="118"/>
        <end position="120"/>
    </location>
</feature>